<accession>B3R5H4</accession>
<organism>
    <name type="scientific">Cupriavidus taiwanensis (strain DSM 17343 / BCRC 17206 / CCUG 44338 / CIP 107171 / LMG 19424 / R1)</name>
    <name type="common">Ralstonia taiwanensis (strain LMG 19424)</name>
    <dbReference type="NCBI Taxonomy" id="977880"/>
    <lineage>
        <taxon>Bacteria</taxon>
        <taxon>Pseudomonadati</taxon>
        <taxon>Pseudomonadota</taxon>
        <taxon>Betaproteobacteria</taxon>
        <taxon>Burkholderiales</taxon>
        <taxon>Burkholderiaceae</taxon>
        <taxon>Cupriavidus</taxon>
    </lineage>
</organism>
<protein>
    <recommendedName>
        <fullName evidence="1">1-deoxy-D-xylulose-5-phosphate synthase</fullName>
        <ecNumber evidence="1">2.2.1.7</ecNumber>
    </recommendedName>
    <alternativeName>
        <fullName evidence="1">1-deoxyxylulose-5-phosphate synthase</fullName>
        <shortName evidence="1">DXP synthase</shortName>
        <shortName evidence="1">DXPS</shortName>
    </alternativeName>
</protein>
<proteinExistence type="inferred from homology"/>
<comment type="function">
    <text evidence="1">Catalyzes the acyloin condensation reaction between C atoms 2 and 3 of pyruvate and glyceraldehyde 3-phosphate to yield 1-deoxy-D-xylulose-5-phosphate (DXP).</text>
</comment>
<comment type="catalytic activity">
    <reaction evidence="1">
        <text>D-glyceraldehyde 3-phosphate + pyruvate + H(+) = 1-deoxy-D-xylulose 5-phosphate + CO2</text>
        <dbReference type="Rhea" id="RHEA:12605"/>
        <dbReference type="ChEBI" id="CHEBI:15361"/>
        <dbReference type="ChEBI" id="CHEBI:15378"/>
        <dbReference type="ChEBI" id="CHEBI:16526"/>
        <dbReference type="ChEBI" id="CHEBI:57792"/>
        <dbReference type="ChEBI" id="CHEBI:59776"/>
        <dbReference type="EC" id="2.2.1.7"/>
    </reaction>
</comment>
<comment type="cofactor">
    <cofactor evidence="1">
        <name>Mg(2+)</name>
        <dbReference type="ChEBI" id="CHEBI:18420"/>
    </cofactor>
    <text evidence="1">Binds 1 Mg(2+) ion per subunit.</text>
</comment>
<comment type="cofactor">
    <cofactor evidence="1">
        <name>thiamine diphosphate</name>
        <dbReference type="ChEBI" id="CHEBI:58937"/>
    </cofactor>
    <text evidence="1">Binds 1 thiamine pyrophosphate per subunit.</text>
</comment>
<comment type="pathway">
    <text evidence="1">Metabolic intermediate biosynthesis; 1-deoxy-D-xylulose 5-phosphate biosynthesis; 1-deoxy-D-xylulose 5-phosphate from D-glyceraldehyde 3-phosphate and pyruvate: step 1/1.</text>
</comment>
<comment type="subunit">
    <text evidence="1">Homodimer.</text>
</comment>
<comment type="similarity">
    <text evidence="1">Belongs to the transketolase family. DXPS subfamily.</text>
</comment>
<keyword id="KW-0414">Isoprene biosynthesis</keyword>
<keyword id="KW-0460">Magnesium</keyword>
<keyword id="KW-0479">Metal-binding</keyword>
<keyword id="KW-0784">Thiamine biosynthesis</keyword>
<keyword id="KW-0786">Thiamine pyrophosphate</keyword>
<keyword id="KW-0808">Transferase</keyword>
<dbReference type="EC" id="2.2.1.7" evidence="1"/>
<dbReference type="EMBL" id="CU633749">
    <property type="protein sequence ID" value="CAQ70169.1"/>
    <property type="molecule type" value="Genomic_DNA"/>
</dbReference>
<dbReference type="RefSeq" id="WP_012353474.1">
    <property type="nucleotide sequence ID" value="NC_010528.1"/>
</dbReference>
<dbReference type="SMR" id="B3R5H4"/>
<dbReference type="GeneID" id="29762617"/>
<dbReference type="KEGG" id="cti:RALTA_A2235"/>
<dbReference type="eggNOG" id="COG1154">
    <property type="taxonomic scope" value="Bacteria"/>
</dbReference>
<dbReference type="HOGENOM" id="CLU_009227_1_4_4"/>
<dbReference type="BioCyc" id="CTAI977880:RALTA_RS10835-MONOMER"/>
<dbReference type="UniPathway" id="UPA00064">
    <property type="reaction ID" value="UER00091"/>
</dbReference>
<dbReference type="Proteomes" id="UP000001692">
    <property type="component" value="Chromosome 1"/>
</dbReference>
<dbReference type="GO" id="GO:0005829">
    <property type="term" value="C:cytosol"/>
    <property type="evidence" value="ECO:0007669"/>
    <property type="project" value="TreeGrafter"/>
</dbReference>
<dbReference type="GO" id="GO:0008661">
    <property type="term" value="F:1-deoxy-D-xylulose-5-phosphate synthase activity"/>
    <property type="evidence" value="ECO:0007669"/>
    <property type="project" value="UniProtKB-UniRule"/>
</dbReference>
<dbReference type="GO" id="GO:0000287">
    <property type="term" value="F:magnesium ion binding"/>
    <property type="evidence" value="ECO:0007669"/>
    <property type="project" value="UniProtKB-UniRule"/>
</dbReference>
<dbReference type="GO" id="GO:0030976">
    <property type="term" value="F:thiamine pyrophosphate binding"/>
    <property type="evidence" value="ECO:0007669"/>
    <property type="project" value="UniProtKB-UniRule"/>
</dbReference>
<dbReference type="GO" id="GO:0052865">
    <property type="term" value="P:1-deoxy-D-xylulose 5-phosphate biosynthetic process"/>
    <property type="evidence" value="ECO:0007669"/>
    <property type="project" value="UniProtKB-UniPathway"/>
</dbReference>
<dbReference type="GO" id="GO:0019288">
    <property type="term" value="P:isopentenyl diphosphate biosynthetic process, methylerythritol 4-phosphate pathway"/>
    <property type="evidence" value="ECO:0007669"/>
    <property type="project" value="TreeGrafter"/>
</dbReference>
<dbReference type="GO" id="GO:0016114">
    <property type="term" value="P:terpenoid biosynthetic process"/>
    <property type="evidence" value="ECO:0007669"/>
    <property type="project" value="UniProtKB-UniRule"/>
</dbReference>
<dbReference type="GO" id="GO:0009228">
    <property type="term" value="P:thiamine biosynthetic process"/>
    <property type="evidence" value="ECO:0007669"/>
    <property type="project" value="UniProtKB-UniRule"/>
</dbReference>
<dbReference type="CDD" id="cd02007">
    <property type="entry name" value="TPP_DXS"/>
    <property type="match status" value="1"/>
</dbReference>
<dbReference type="CDD" id="cd07033">
    <property type="entry name" value="TPP_PYR_DXS_TK_like"/>
    <property type="match status" value="1"/>
</dbReference>
<dbReference type="FunFam" id="3.40.50.920:FF:000002">
    <property type="entry name" value="1-deoxy-D-xylulose-5-phosphate synthase"/>
    <property type="match status" value="1"/>
</dbReference>
<dbReference type="FunFam" id="3.40.50.970:FF:000005">
    <property type="entry name" value="1-deoxy-D-xylulose-5-phosphate synthase"/>
    <property type="match status" value="1"/>
</dbReference>
<dbReference type="Gene3D" id="3.40.50.920">
    <property type="match status" value="1"/>
</dbReference>
<dbReference type="Gene3D" id="3.40.50.970">
    <property type="match status" value="2"/>
</dbReference>
<dbReference type="HAMAP" id="MF_00315">
    <property type="entry name" value="DXP_synth"/>
    <property type="match status" value="1"/>
</dbReference>
<dbReference type="InterPro" id="IPR005477">
    <property type="entry name" value="Dxylulose-5-P_synthase"/>
</dbReference>
<dbReference type="InterPro" id="IPR029061">
    <property type="entry name" value="THDP-binding"/>
</dbReference>
<dbReference type="InterPro" id="IPR009014">
    <property type="entry name" value="Transketo_C/PFOR_II"/>
</dbReference>
<dbReference type="InterPro" id="IPR005475">
    <property type="entry name" value="Transketolase-like_Pyr-bd"/>
</dbReference>
<dbReference type="InterPro" id="IPR020826">
    <property type="entry name" value="Transketolase_BS"/>
</dbReference>
<dbReference type="InterPro" id="IPR033248">
    <property type="entry name" value="Transketolase_C"/>
</dbReference>
<dbReference type="InterPro" id="IPR049557">
    <property type="entry name" value="Transketolase_CS"/>
</dbReference>
<dbReference type="NCBIfam" id="TIGR00204">
    <property type="entry name" value="dxs"/>
    <property type="match status" value="1"/>
</dbReference>
<dbReference type="NCBIfam" id="NF003933">
    <property type="entry name" value="PRK05444.2-2"/>
    <property type="match status" value="1"/>
</dbReference>
<dbReference type="PANTHER" id="PTHR43322">
    <property type="entry name" value="1-D-DEOXYXYLULOSE 5-PHOSPHATE SYNTHASE-RELATED"/>
    <property type="match status" value="1"/>
</dbReference>
<dbReference type="PANTHER" id="PTHR43322:SF5">
    <property type="entry name" value="1-DEOXY-D-XYLULOSE-5-PHOSPHATE SYNTHASE, CHLOROPLASTIC"/>
    <property type="match status" value="1"/>
</dbReference>
<dbReference type="Pfam" id="PF13292">
    <property type="entry name" value="DXP_synthase_N"/>
    <property type="match status" value="1"/>
</dbReference>
<dbReference type="Pfam" id="PF02779">
    <property type="entry name" value="Transket_pyr"/>
    <property type="match status" value="1"/>
</dbReference>
<dbReference type="Pfam" id="PF02780">
    <property type="entry name" value="Transketolase_C"/>
    <property type="match status" value="1"/>
</dbReference>
<dbReference type="SMART" id="SM00861">
    <property type="entry name" value="Transket_pyr"/>
    <property type="match status" value="1"/>
</dbReference>
<dbReference type="SUPFAM" id="SSF52518">
    <property type="entry name" value="Thiamin diphosphate-binding fold (THDP-binding)"/>
    <property type="match status" value="2"/>
</dbReference>
<dbReference type="SUPFAM" id="SSF52922">
    <property type="entry name" value="TK C-terminal domain-like"/>
    <property type="match status" value="1"/>
</dbReference>
<dbReference type="PROSITE" id="PS00801">
    <property type="entry name" value="TRANSKETOLASE_1"/>
    <property type="match status" value="1"/>
</dbReference>
<dbReference type="PROSITE" id="PS00802">
    <property type="entry name" value="TRANSKETOLASE_2"/>
    <property type="match status" value="1"/>
</dbReference>
<sequence>MTYALLNKIDAPADLRKLDRRELQTLADELRAYVLESVSQTGGHLSSNLGTVELTIALHYVFNTPDDRLVWDVGHQSYPHKILTGRRERMRTLRQWGGISGFPRRSESEYDTFGTAHSSTSISAALGMALGARTLGQKRVSVAVIGDGAMTAGMAFEALNNAGVYKDLPLVVVLNDNDMSISPPVGALNRHLARLLSGQFYAATKKGIEKVLSVAPPVLEFAKRFEEHAKGMMVPATLFEEFGFNYIGPIDGHDLNSLVPTLQNIRERALEGGGPQFLHVVTKKGQGYKLAEADPILYHGPGKFNPAEGIRPAAKPARKTYTQVFGDWLCDMAAADKRLVGITPAMREGSGMVEFEKRFPDRYYDVGIAEQHAVTFAGGLACEGLKPVVAIYSTFLQRGYDQLIHDVALQNLPVVFALDRAGLVGADGATHAGAYDIAYLRCIPNMMVMTPSDENECRQLLTTAFQQDCPTAVRYPRGSGPGAAIAADLAPVPVGKGVVRREAGARAGHRVGFLAFGSMVQPALGAAEALDATVADMRFVKPLDVALVKRLAADHDYLVTVEEGSVMGGAGSAVLEALAEAGIDKPVLTLGLPDRFVDHGDPAFLLQQCGLDAAGIERSVRERFGLDQPQVTVAPRVA</sequence>
<gene>
    <name evidence="1" type="primary">dxs</name>
    <name type="ordered locus">RALTA_A2235</name>
</gene>
<feature type="chain" id="PRO_1000115734" description="1-deoxy-D-xylulose-5-phosphate synthase">
    <location>
        <begin position="1"/>
        <end position="638"/>
    </location>
</feature>
<feature type="binding site" evidence="1">
    <location>
        <position position="75"/>
    </location>
    <ligand>
        <name>thiamine diphosphate</name>
        <dbReference type="ChEBI" id="CHEBI:58937"/>
    </ligand>
</feature>
<feature type="binding site" evidence="1">
    <location>
        <begin position="116"/>
        <end position="118"/>
    </location>
    <ligand>
        <name>thiamine diphosphate</name>
        <dbReference type="ChEBI" id="CHEBI:58937"/>
    </ligand>
</feature>
<feature type="binding site" evidence="1">
    <location>
        <position position="147"/>
    </location>
    <ligand>
        <name>Mg(2+)</name>
        <dbReference type="ChEBI" id="CHEBI:18420"/>
    </ligand>
</feature>
<feature type="binding site" evidence="1">
    <location>
        <begin position="148"/>
        <end position="149"/>
    </location>
    <ligand>
        <name>thiamine diphosphate</name>
        <dbReference type="ChEBI" id="CHEBI:58937"/>
    </ligand>
</feature>
<feature type="binding site" evidence="1">
    <location>
        <position position="177"/>
    </location>
    <ligand>
        <name>Mg(2+)</name>
        <dbReference type="ChEBI" id="CHEBI:18420"/>
    </ligand>
</feature>
<feature type="binding site" evidence="1">
    <location>
        <position position="177"/>
    </location>
    <ligand>
        <name>thiamine diphosphate</name>
        <dbReference type="ChEBI" id="CHEBI:58937"/>
    </ligand>
</feature>
<feature type="binding site" evidence="1">
    <location>
        <position position="288"/>
    </location>
    <ligand>
        <name>thiamine diphosphate</name>
        <dbReference type="ChEBI" id="CHEBI:58937"/>
    </ligand>
</feature>
<feature type="binding site" evidence="1">
    <location>
        <position position="370"/>
    </location>
    <ligand>
        <name>thiamine diphosphate</name>
        <dbReference type="ChEBI" id="CHEBI:58937"/>
    </ligand>
</feature>
<name>DXS_CUPTR</name>
<evidence type="ECO:0000255" key="1">
    <source>
        <dbReference type="HAMAP-Rule" id="MF_00315"/>
    </source>
</evidence>
<reference key="1">
    <citation type="journal article" date="2008" name="Genome Res.">
        <title>Genome sequence of the beta-rhizobium Cupriavidus taiwanensis and comparative genomics of rhizobia.</title>
        <authorList>
            <person name="Amadou C."/>
            <person name="Pascal G."/>
            <person name="Mangenot S."/>
            <person name="Glew M."/>
            <person name="Bontemps C."/>
            <person name="Capela D."/>
            <person name="Carrere S."/>
            <person name="Cruveiller S."/>
            <person name="Dossat C."/>
            <person name="Lajus A."/>
            <person name="Marchetti M."/>
            <person name="Poinsot V."/>
            <person name="Rouy Z."/>
            <person name="Servin B."/>
            <person name="Saad M."/>
            <person name="Schenowitz C."/>
            <person name="Barbe V."/>
            <person name="Batut J."/>
            <person name="Medigue C."/>
            <person name="Masson-Boivin C."/>
        </authorList>
    </citation>
    <scope>NUCLEOTIDE SEQUENCE [LARGE SCALE GENOMIC DNA]</scope>
    <source>
        <strain>DSM 17343 / BCRC 17206 / CCUG 44338 / CIP 107171 / LMG 19424 / R1</strain>
    </source>
</reference>